<evidence type="ECO:0000255" key="1">
    <source>
        <dbReference type="HAMAP-Rule" id="MF_00286"/>
    </source>
</evidence>
<sequence length="169" mass="18213">MSNDTFYLKREKRFLVLLGIICLSLIGGALYMQIALGEAPCPLCILQRYALLFIAIFAFIGAAMNGRRGVTVFEALVTLSALCGIAAAGRHAWILAHPSDSCGIDILQPIVDGLPLATLFPTGFQVSGFCTTPYPPVLGLSLAQWALTAFVLTAILVPACIIRNRRKPY</sequence>
<reference key="1">
    <citation type="journal article" date="2003" name="Proc. Natl. Acad. Sci. U.S.A.">
        <title>The complete genome sequence of the Arabidopsis and tomato pathogen Pseudomonas syringae pv. tomato DC3000.</title>
        <authorList>
            <person name="Buell C.R."/>
            <person name="Joardar V."/>
            <person name="Lindeberg M."/>
            <person name="Selengut J."/>
            <person name="Paulsen I.T."/>
            <person name="Gwinn M.L."/>
            <person name="Dodson R.J."/>
            <person name="DeBoy R.T."/>
            <person name="Durkin A.S."/>
            <person name="Kolonay J.F."/>
            <person name="Madupu R."/>
            <person name="Daugherty S.C."/>
            <person name="Brinkac L.M."/>
            <person name="Beanan M.J."/>
            <person name="Haft D.H."/>
            <person name="Nelson W.C."/>
            <person name="Davidsen T.M."/>
            <person name="Zafar N."/>
            <person name="Zhou L."/>
            <person name="Liu J."/>
            <person name="Yuan Q."/>
            <person name="Khouri H.M."/>
            <person name="Fedorova N.B."/>
            <person name="Tran B."/>
            <person name="Russell D."/>
            <person name="Berry K.J."/>
            <person name="Utterback T.R."/>
            <person name="Van Aken S.E."/>
            <person name="Feldblyum T.V."/>
            <person name="D'Ascenzo M."/>
            <person name="Deng W.-L."/>
            <person name="Ramos A.R."/>
            <person name="Alfano J.R."/>
            <person name="Cartinhour S."/>
            <person name="Chatterjee A.K."/>
            <person name="Delaney T.P."/>
            <person name="Lazarowitz S.G."/>
            <person name="Martin G.B."/>
            <person name="Schneider D.J."/>
            <person name="Tang X."/>
            <person name="Bender C.L."/>
            <person name="White O."/>
            <person name="Fraser C.M."/>
            <person name="Collmer A."/>
        </authorList>
    </citation>
    <scope>NUCLEOTIDE SEQUENCE [LARGE SCALE GENOMIC DNA]</scope>
    <source>
        <strain>ATCC BAA-871 / DC3000</strain>
    </source>
</reference>
<organism>
    <name type="scientific">Pseudomonas syringae pv. tomato (strain ATCC BAA-871 / DC3000)</name>
    <dbReference type="NCBI Taxonomy" id="223283"/>
    <lineage>
        <taxon>Bacteria</taxon>
        <taxon>Pseudomonadati</taxon>
        <taxon>Pseudomonadota</taxon>
        <taxon>Gammaproteobacteria</taxon>
        <taxon>Pseudomonadales</taxon>
        <taxon>Pseudomonadaceae</taxon>
        <taxon>Pseudomonas</taxon>
    </lineage>
</organism>
<keyword id="KW-0997">Cell inner membrane</keyword>
<keyword id="KW-1003">Cell membrane</keyword>
<keyword id="KW-0143">Chaperone</keyword>
<keyword id="KW-1015">Disulfide bond</keyword>
<keyword id="KW-0249">Electron transport</keyword>
<keyword id="KW-0472">Membrane</keyword>
<keyword id="KW-0560">Oxidoreductase</keyword>
<keyword id="KW-0676">Redox-active center</keyword>
<keyword id="KW-1185">Reference proteome</keyword>
<keyword id="KW-0812">Transmembrane</keyword>
<keyword id="KW-1133">Transmembrane helix</keyword>
<keyword id="KW-0813">Transport</keyword>
<gene>
    <name evidence="1" type="primary">dsbB</name>
    <name type="ordered locus">PSPTO_1324</name>
</gene>
<comment type="function">
    <text evidence="1">Required for disulfide bond formation in some periplasmic proteins. Acts by oxidizing the DsbA protein.</text>
</comment>
<comment type="subcellular location">
    <subcellularLocation>
        <location evidence="1">Cell inner membrane</location>
        <topology evidence="1">Multi-pass membrane protein</topology>
    </subcellularLocation>
</comment>
<comment type="similarity">
    <text evidence="1">Belongs to the DsbB family.</text>
</comment>
<dbReference type="EMBL" id="AE016853">
    <property type="protein sequence ID" value="AAO54846.1"/>
    <property type="molecule type" value="Genomic_DNA"/>
</dbReference>
<dbReference type="RefSeq" id="NP_791151.1">
    <property type="nucleotide sequence ID" value="NC_004578.1"/>
</dbReference>
<dbReference type="RefSeq" id="WP_005764026.1">
    <property type="nucleotide sequence ID" value="NC_004578.1"/>
</dbReference>
<dbReference type="SMR" id="Q887H2"/>
<dbReference type="STRING" id="223283.PSPTO_1324"/>
<dbReference type="GeneID" id="1182960"/>
<dbReference type="KEGG" id="pst:PSPTO_1324"/>
<dbReference type="PATRIC" id="fig|223283.9.peg.1346"/>
<dbReference type="eggNOG" id="COG1495">
    <property type="taxonomic scope" value="Bacteria"/>
</dbReference>
<dbReference type="HOGENOM" id="CLU_098660_1_0_6"/>
<dbReference type="OrthoDB" id="3711263at2"/>
<dbReference type="PhylomeDB" id="Q887H2"/>
<dbReference type="Proteomes" id="UP000002515">
    <property type="component" value="Chromosome"/>
</dbReference>
<dbReference type="GO" id="GO:0005886">
    <property type="term" value="C:plasma membrane"/>
    <property type="evidence" value="ECO:0007669"/>
    <property type="project" value="UniProtKB-SubCell"/>
</dbReference>
<dbReference type="GO" id="GO:0009055">
    <property type="term" value="F:electron transfer activity"/>
    <property type="evidence" value="ECO:0007669"/>
    <property type="project" value="UniProtKB-UniRule"/>
</dbReference>
<dbReference type="GO" id="GO:0015035">
    <property type="term" value="F:protein-disulfide reductase activity"/>
    <property type="evidence" value="ECO:0007669"/>
    <property type="project" value="UniProtKB-UniRule"/>
</dbReference>
<dbReference type="GO" id="GO:0006457">
    <property type="term" value="P:protein folding"/>
    <property type="evidence" value="ECO:0007669"/>
    <property type="project" value="InterPro"/>
</dbReference>
<dbReference type="Gene3D" id="1.20.1550.10">
    <property type="entry name" value="DsbB-like"/>
    <property type="match status" value="1"/>
</dbReference>
<dbReference type="HAMAP" id="MF_00286">
    <property type="entry name" value="DsbB"/>
    <property type="match status" value="1"/>
</dbReference>
<dbReference type="InterPro" id="IPR003752">
    <property type="entry name" value="DiS_bond_form_DsbB/BdbC"/>
</dbReference>
<dbReference type="InterPro" id="IPR022920">
    <property type="entry name" value="Disulphide_bond_form_DsbB"/>
</dbReference>
<dbReference type="InterPro" id="IPR050183">
    <property type="entry name" value="DsbB"/>
</dbReference>
<dbReference type="InterPro" id="IPR023380">
    <property type="entry name" value="DsbB-like_sf"/>
</dbReference>
<dbReference type="NCBIfam" id="NF002552">
    <property type="entry name" value="PRK02110.1"/>
    <property type="match status" value="1"/>
</dbReference>
<dbReference type="PANTHER" id="PTHR36570">
    <property type="entry name" value="DISULFIDE BOND FORMATION PROTEIN B"/>
    <property type="match status" value="1"/>
</dbReference>
<dbReference type="PANTHER" id="PTHR36570:SF3">
    <property type="entry name" value="DISULFIDE BOND FORMATION PROTEIN B"/>
    <property type="match status" value="1"/>
</dbReference>
<dbReference type="Pfam" id="PF02600">
    <property type="entry name" value="DsbB"/>
    <property type="match status" value="1"/>
</dbReference>
<dbReference type="SUPFAM" id="SSF158442">
    <property type="entry name" value="DsbB-like"/>
    <property type="match status" value="1"/>
</dbReference>
<feature type="chain" id="PRO_0000059354" description="Disulfide bond formation protein B">
    <location>
        <begin position="1"/>
        <end position="169"/>
    </location>
</feature>
<feature type="topological domain" description="Cytoplasmic" evidence="1">
    <location>
        <begin position="1"/>
        <end position="14"/>
    </location>
</feature>
<feature type="transmembrane region" description="Helical" evidence="1">
    <location>
        <begin position="15"/>
        <end position="31"/>
    </location>
</feature>
<feature type="topological domain" description="Periplasmic" evidence="1">
    <location>
        <begin position="32"/>
        <end position="49"/>
    </location>
</feature>
<feature type="transmembrane region" description="Helical" evidence="1">
    <location>
        <begin position="50"/>
        <end position="64"/>
    </location>
</feature>
<feature type="topological domain" description="Cytoplasmic" evidence="1">
    <location>
        <begin position="65"/>
        <end position="71"/>
    </location>
</feature>
<feature type="transmembrane region" description="Helical" evidence="1">
    <location>
        <begin position="72"/>
        <end position="89"/>
    </location>
</feature>
<feature type="topological domain" description="Periplasmic" evidence="1">
    <location>
        <begin position="90"/>
        <end position="144"/>
    </location>
</feature>
<feature type="transmembrane region" description="Helical" evidence="1">
    <location>
        <begin position="145"/>
        <end position="163"/>
    </location>
</feature>
<feature type="topological domain" description="Cytoplasmic" evidence="1">
    <location>
        <begin position="164"/>
        <end position="169"/>
    </location>
</feature>
<feature type="disulfide bond" description="Redox-active" evidence="1">
    <location>
        <begin position="41"/>
        <end position="44"/>
    </location>
</feature>
<feature type="disulfide bond" description="Redox-active" evidence="1">
    <location>
        <begin position="102"/>
        <end position="130"/>
    </location>
</feature>
<name>DSBB_PSESM</name>
<protein>
    <recommendedName>
        <fullName evidence="1">Disulfide bond formation protein B</fullName>
    </recommendedName>
    <alternativeName>
        <fullName evidence="1">Disulfide oxidoreductase</fullName>
    </alternativeName>
</protein>
<accession>Q887H2</accession>
<proteinExistence type="inferred from homology"/>